<dbReference type="EC" id="5.1.3.35" evidence="2"/>
<dbReference type="EMBL" id="Y18523">
    <property type="protein sequence ID" value="CAD29485.2"/>
    <property type="molecule type" value="Genomic_DNA"/>
</dbReference>
<dbReference type="EMBL" id="CP003170">
    <property type="protein sequence ID" value="AEV84574.1"/>
    <property type="molecule type" value="Genomic_DNA"/>
</dbReference>
<dbReference type="RefSeq" id="WP_014690646.1">
    <property type="nucleotide sequence ID" value="NC_017803.1"/>
</dbReference>
<dbReference type="SMR" id="Q8RMD1"/>
<dbReference type="STRING" id="134676.ACPL_3679"/>
<dbReference type="KEGG" id="ase:ACPL_3679"/>
<dbReference type="PATRIC" id="fig|134676.3.peg.3595"/>
<dbReference type="eggNOG" id="COG1082">
    <property type="taxonomic scope" value="Bacteria"/>
</dbReference>
<dbReference type="HOGENOM" id="CLU_1064864_0_0_11"/>
<dbReference type="OrthoDB" id="3612467at2"/>
<dbReference type="BRENDA" id="5.1.3.35">
    <property type="organism ID" value="144"/>
</dbReference>
<dbReference type="Proteomes" id="UP000005440">
    <property type="component" value="Chromosome"/>
</dbReference>
<dbReference type="GO" id="GO:0016853">
    <property type="term" value="F:isomerase activity"/>
    <property type="evidence" value="ECO:0007669"/>
    <property type="project" value="UniProtKB-KW"/>
</dbReference>
<dbReference type="Gene3D" id="3.20.20.150">
    <property type="entry name" value="Divalent-metal-dependent TIM barrel enzymes"/>
    <property type="match status" value="1"/>
</dbReference>
<dbReference type="InterPro" id="IPR050312">
    <property type="entry name" value="IolE/XylAMocC-like"/>
</dbReference>
<dbReference type="InterPro" id="IPR036237">
    <property type="entry name" value="Xyl_isomerase-like_sf"/>
</dbReference>
<dbReference type="InterPro" id="IPR013022">
    <property type="entry name" value="Xyl_isomerase-like_TIM-brl"/>
</dbReference>
<dbReference type="PANTHER" id="PTHR12110">
    <property type="entry name" value="HYDROXYPYRUVATE ISOMERASE"/>
    <property type="match status" value="1"/>
</dbReference>
<dbReference type="PANTHER" id="PTHR12110:SF41">
    <property type="entry name" value="INOSOSE DEHYDRATASE"/>
    <property type="match status" value="1"/>
</dbReference>
<dbReference type="Pfam" id="PF01261">
    <property type="entry name" value="AP_endonuc_2"/>
    <property type="match status" value="1"/>
</dbReference>
<dbReference type="SUPFAM" id="SSF51658">
    <property type="entry name" value="Xylose isomerase-like"/>
    <property type="match status" value="1"/>
</dbReference>
<proteinExistence type="evidence at protein level"/>
<sequence>MTCRVGLTEWRLAPSGAAAIRLAAAVGADGIQLDFGGPGRGVLVDGPGRAGQLRAVADEAGVDLLALAGNLLNDIGLTSQPAVVQPVLARLADTATELGVPLLIVPSFRRSAITDAMSFTRTAAALRWAVSLAEARGIVLASENVLPPARARQLVEEVGSPAFRLLLDTFNPVRYGLDPAWLATELRPWWADQIHLKDGPPDTGPSPLLGAGQGGVRRTLTALRGSPAPVRALVLENDYRDGHGARLRADLEWARRAAVNARESEKGKLT</sequence>
<comment type="function">
    <text evidence="2">Involved in the biosynthesis of the alpha-glucosidase inhibitor acarbose. Catalyzes the 2-epimerisation of 2-epi-5-epivaliolone 7-phosphate to yield 5-epi-valiolone 7-phosphate.</text>
</comment>
<comment type="catalytic activity">
    <reaction evidence="2">
        <text>2-epi-5-epi-valiolone 7-phosphate = 5-epi-valiolone 7-phosphate</text>
        <dbReference type="Rhea" id="RHEA:46932"/>
        <dbReference type="ChEBI" id="CHEBI:84362"/>
        <dbReference type="ChEBI" id="CHEBI:87125"/>
        <dbReference type="EC" id="5.1.3.35"/>
    </reaction>
</comment>
<comment type="similarity">
    <text evidence="4">Belongs to the hyi family.</text>
</comment>
<keyword id="KW-0413">Isomerase</keyword>
<keyword id="KW-1185">Reference proteome</keyword>
<name>ACBO_ACTS5</name>
<gene>
    <name type="primary">acbO</name>
    <name type="ordered locus">ACPL_3679</name>
</gene>
<evidence type="ECO:0000250" key="1">
    <source>
        <dbReference type="UniProtKB" id="Q9WYP7"/>
    </source>
</evidence>
<evidence type="ECO:0000269" key="2">
    <source>
    </source>
</evidence>
<evidence type="ECO:0000303" key="3">
    <source>
    </source>
</evidence>
<evidence type="ECO:0000305" key="4"/>
<organism>
    <name type="scientific">Actinoplanes sp. (strain ATCC 31044 / CBS 674.73 / SE50/110)</name>
    <dbReference type="NCBI Taxonomy" id="134676"/>
    <lineage>
        <taxon>Bacteria</taxon>
        <taxon>Bacillati</taxon>
        <taxon>Actinomycetota</taxon>
        <taxon>Actinomycetes</taxon>
        <taxon>Micromonosporales</taxon>
        <taxon>Micromonosporaceae</taxon>
        <taxon>Actinoplanes</taxon>
    </lineage>
</organism>
<protein>
    <recommendedName>
        <fullName evidence="3">2-epi-5-epi-valiolone 7-phosphate 2-epimerase</fullName>
        <ecNumber evidence="2">5.1.3.35</ecNumber>
    </recommendedName>
</protein>
<accession>Q8RMD1</accession>
<reference key="1">
    <citation type="journal article" date="1999" name="J. Biol. Chem.">
        <title>The AcbC protein from Actinoplanes species is a C7-cyclitol synthase related to 3-dehydroquinate synthases and is involved in the biosynthesis of the alpha-glucosidase inhibitor acarbose.</title>
        <authorList>
            <person name="Stratmann A."/>
            <person name="Mahmud T."/>
            <person name="Lee S."/>
            <person name="Distler J."/>
            <person name="Floss H.G."/>
            <person name="Piepersberg W."/>
        </authorList>
    </citation>
    <scope>NUCLEOTIDE SEQUENCE [GENOMIC DNA]</scope>
    <source>
        <strain>ATCC 31044 / CBS 674.73 / SE50/110</strain>
    </source>
</reference>
<reference key="2">
    <citation type="journal article" date="2003" name="FEBS Lett.">
        <title>The acarbose-biosynthetic enzyme AcbO from Actinoplanes sp. SE 50/110 is a 2-epi-5-epi-valiolone-7-phosphate 2-epimerase.</title>
        <authorList>
            <person name="Zhang C.S."/>
            <person name="Podeschwa M."/>
            <person name="Altenbach H.J."/>
            <person name="Piepersberg W."/>
            <person name="Wehmeier U.F."/>
        </authorList>
    </citation>
    <scope>NUCLEOTIDE SEQUENCE [GENOMIC DNA]</scope>
    <scope>FUNCTION</scope>
    <scope>CATALYTIC ACTIVITY</scope>
    <source>
        <strain>ATCC 31044 / CBS 674.73 / SE50/110</strain>
    </source>
</reference>
<reference key="3">
    <citation type="submission" date="2006-01" db="EMBL/GenBank/DDBJ databases">
        <authorList>
            <person name="Wehmeier U.F."/>
        </authorList>
    </citation>
    <scope>NUCLEOTIDE SEQUENCE [GENOMIC DNA]</scope>
    <source>
        <strain>ATCC 31044 / CBS 674.73 / SE50/110</strain>
    </source>
</reference>
<reference key="4">
    <citation type="submission" date="2011-12" db="EMBL/GenBank/DDBJ databases">
        <title>The complete genome sequence of the acarbose producer Actinoplanes sp. SE50/110.</title>
        <authorList>
            <person name="Schwientek P."/>
            <person name="Szczepanowski R."/>
            <person name="Kalinowski J."/>
            <person name="Klein A."/>
            <person name="Selber K."/>
            <person name="Wehmeier U.F."/>
            <person name="Stoye J."/>
            <person name="Puehler A."/>
        </authorList>
    </citation>
    <scope>NUCLEOTIDE SEQUENCE [LARGE SCALE GENOMIC DNA]</scope>
    <source>
        <strain>ATCC 31044 / CBS 674.73 / SE50/110</strain>
    </source>
</reference>
<feature type="chain" id="PRO_0000435305" description="2-epi-5-epi-valiolone 7-phosphate 2-epimerase">
    <location>
        <begin position="1"/>
        <end position="270"/>
    </location>
</feature>
<feature type="active site" description="Proton donor/acceptor" evidence="1">
    <location>
        <position position="143"/>
    </location>
</feature>
<feature type="active site" description="Proton donor/acceptor" evidence="1">
    <location>
        <position position="236"/>
    </location>
</feature>